<gene>
    <name evidence="1" type="primary">rpsU</name>
    <name type="ordered locus">M6_Spy0614</name>
</gene>
<dbReference type="EMBL" id="CP000003">
    <property type="protein sequence ID" value="AAT86749.1"/>
    <property type="status" value="ALT_INIT"/>
    <property type="molecule type" value="Genomic_DNA"/>
</dbReference>
<dbReference type="RefSeq" id="WP_000048058.1">
    <property type="nucleotide sequence ID" value="NC_006086.1"/>
</dbReference>
<dbReference type="SMR" id="Q5XCW4"/>
<dbReference type="GeneID" id="93936799"/>
<dbReference type="KEGG" id="spa:M6_Spy0614"/>
<dbReference type="HOGENOM" id="CLU_159258_3_2_9"/>
<dbReference type="Proteomes" id="UP000001167">
    <property type="component" value="Chromosome"/>
</dbReference>
<dbReference type="GO" id="GO:1990904">
    <property type="term" value="C:ribonucleoprotein complex"/>
    <property type="evidence" value="ECO:0007669"/>
    <property type="project" value="UniProtKB-KW"/>
</dbReference>
<dbReference type="GO" id="GO:0005840">
    <property type="term" value="C:ribosome"/>
    <property type="evidence" value="ECO:0007669"/>
    <property type="project" value="UniProtKB-KW"/>
</dbReference>
<dbReference type="GO" id="GO:0003735">
    <property type="term" value="F:structural constituent of ribosome"/>
    <property type="evidence" value="ECO:0007669"/>
    <property type="project" value="InterPro"/>
</dbReference>
<dbReference type="GO" id="GO:0006412">
    <property type="term" value="P:translation"/>
    <property type="evidence" value="ECO:0007669"/>
    <property type="project" value="UniProtKB-UniRule"/>
</dbReference>
<dbReference type="Gene3D" id="1.20.5.1150">
    <property type="entry name" value="Ribosomal protein S8"/>
    <property type="match status" value="1"/>
</dbReference>
<dbReference type="HAMAP" id="MF_00358">
    <property type="entry name" value="Ribosomal_bS21"/>
    <property type="match status" value="1"/>
</dbReference>
<dbReference type="InterPro" id="IPR001911">
    <property type="entry name" value="Ribosomal_bS21"/>
</dbReference>
<dbReference type="InterPro" id="IPR018278">
    <property type="entry name" value="Ribosomal_bS21_CS"/>
</dbReference>
<dbReference type="InterPro" id="IPR038380">
    <property type="entry name" value="Ribosomal_bS21_sf"/>
</dbReference>
<dbReference type="NCBIfam" id="TIGR00030">
    <property type="entry name" value="S21p"/>
    <property type="match status" value="1"/>
</dbReference>
<dbReference type="PANTHER" id="PTHR21109">
    <property type="entry name" value="MITOCHONDRIAL 28S RIBOSOMAL PROTEIN S21"/>
    <property type="match status" value="1"/>
</dbReference>
<dbReference type="PANTHER" id="PTHR21109:SF22">
    <property type="entry name" value="SMALL RIBOSOMAL SUBUNIT PROTEIN BS21"/>
    <property type="match status" value="1"/>
</dbReference>
<dbReference type="Pfam" id="PF01165">
    <property type="entry name" value="Ribosomal_S21"/>
    <property type="match status" value="1"/>
</dbReference>
<dbReference type="PRINTS" id="PR00976">
    <property type="entry name" value="RIBOSOMALS21"/>
</dbReference>
<dbReference type="PROSITE" id="PS01181">
    <property type="entry name" value="RIBOSOMAL_S21"/>
    <property type="match status" value="1"/>
</dbReference>
<sequence>MSKTVVRKNESLDDALRRFKRSVTKAGTLQESRKREFYEKPSVKRKRKSEAARKRKKF</sequence>
<reference key="1">
    <citation type="journal article" date="2004" name="J. Infect. Dis.">
        <title>Progress toward characterization of the group A Streptococcus metagenome: complete genome sequence of a macrolide-resistant serotype M6 strain.</title>
        <authorList>
            <person name="Banks D.J."/>
            <person name="Porcella S.F."/>
            <person name="Barbian K.D."/>
            <person name="Beres S.B."/>
            <person name="Philips L.E."/>
            <person name="Voyich J.M."/>
            <person name="DeLeo F.R."/>
            <person name="Martin J.M."/>
            <person name="Somerville G.A."/>
            <person name="Musser J.M."/>
        </authorList>
    </citation>
    <scope>NUCLEOTIDE SEQUENCE [LARGE SCALE GENOMIC DNA]</scope>
    <source>
        <strain>ATCC BAA-946 / MGAS10394</strain>
    </source>
</reference>
<comment type="similarity">
    <text evidence="1">Belongs to the bacterial ribosomal protein bS21 family.</text>
</comment>
<comment type="sequence caution" evidence="3">
    <conflict type="erroneous initiation">
        <sequence resource="EMBL-CDS" id="AAT86749"/>
    </conflict>
</comment>
<proteinExistence type="inferred from homology"/>
<keyword id="KW-0687">Ribonucleoprotein</keyword>
<keyword id="KW-0689">Ribosomal protein</keyword>
<evidence type="ECO:0000255" key="1">
    <source>
        <dbReference type="HAMAP-Rule" id="MF_00358"/>
    </source>
</evidence>
<evidence type="ECO:0000256" key="2">
    <source>
        <dbReference type="SAM" id="MobiDB-lite"/>
    </source>
</evidence>
<evidence type="ECO:0000305" key="3"/>
<organism>
    <name type="scientific">Streptococcus pyogenes serotype M6 (strain ATCC BAA-946 / MGAS10394)</name>
    <dbReference type="NCBI Taxonomy" id="286636"/>
    <lineage>
        <taxon>Bacteria</taxon>
        <taxon>Bacillati</taxon>
        <taxon>Bacillota</taxon>
        <taxon>Bacilli</taxon>
        <taxon>Lactobacillales</taxon>
        <taxon>Streptococcaceae</taxon>
        <taxon>Streptococcus</taxon>
    </lineage>
</organism>
<protein>
    <recommendedName>
        <fullName evidence="1">Small ribosomal subunit protein bS21</fullName>
    </recommendedName>
    <alternativeName>
        <fullName evidence="3">30S ribosomal protein S21</fullName>
    </alternativeName>
</protein>
<accession>Q5XCW4</accession>
<name>RS21_STRP6</name>
<feature type="chain" id="PRO_0000178385" description="Small ribosomal subunit protein bS21">
    <location>
        <begin position="1"/>
        <end position="58"/>
    </location>
</feature>
<feature type="region of interest" description="Disordered" evidence="2">
    <location>
        <begin position="36"/>
        <end position="58"/>
    </location>
</feature>
<feature type="compositionally biased region" description="Basic residues" evidence="2">
    <location>
        <begin position="43"/>
        <end position="58"/>
    </location>
</feature>